<feature type="chain" id="PRO_1000197460" description="Polyamine aminopropyltransferase">
    <location>
        <begin position="1"/>
        <end position="278"/>
    </location>
</feature>
<feature type="domain" description="PABS" evidence="1">
    <location>
        <begin position="5"/>
        <end position="238"/>
    </location>
</feature>
<feature type="active site" description="Proton acceptor" evidence="1">
    <location>
        <position position="158"/>
    </location>
</feature>
<feature type="binding site" evidence="1">
    <location>
        <position position="34"/>
    </location>
    <ligand>
        <name>S-methyl-5'-thioadenosine</name>
        <dbReference type="ChEBI" id="CHEBI:17509"/>
    </ligand>
</feature>
<feature type="binding site" evidence="1">
    <location>
        <position position="65"/>
    </location>
    <ligand>
        <name>spermidine</name>
        <dbReference type="ChEBI" id="CHEBI:57834"/>
    </ligand>
</feature>
<feature type="binding site" evidence="1">
    <location>
        <position position="89"/>
    </location>
    <ligand>
        <name>spermidine</name>
        <dbReference type="ChEBI" id="CHEBI:57834"/>
    </ligand>
</feature>
<feature type="binding site" evidence="1">
    <location>
        <position position="109"/>
    </location>
    <ligand>
        <name>S-methyl-5'-thioadenosine</name>
        <dbReference type="ChEBI" id="CHEBI:17509"/>
    </ligand>
</feature>
<feature type="binding site" evidence="1">
    <location>
        <begin position="140"/>
        <end position="141"/>
    </location>
    <ligand>
        <name>S-methyl-5'-thioadenosine</name>
        <dbReference type="ChEBI" id="CHEBI:17509"/>
    </ligand>
</feature>
<feature type="binding site" evidence="1">
    <location>
        <begin position="158"/>
        <end position="161"/>
    </location>
    <ligand>
        <name>spermidine</name>
        <dbReference type="ChEBI" id="CHEBI:57834"/>
    </ligand>
</feature>
<feature type="binding site" evidence="1">
    <location>
        <position position="165"/>
    </location>
    <ligand>
        <name>S-methyl-5'-thioadenosine</name>
        <dbReference type="ChEBI" id="CHEBI:17509"/>
    </ligand>
</feature>
<gene>
    <name evidence="1" type="primary">speE</name>
    <name type="ordered locus">Athe_1314</name>
</gene>
<dbReference type="EC" id="2.5.1.16" evidence="1"/>
<dbReference type="EMBL" id="CP001393">
    <property type="protein sequence ID" value="ACM60414.1"/>
    <property type="molecule type" value="Genomic_DNA"/>
</dbReference>
<dbReference type="SMR" id="B9MRW0"/>
<dbReference type="STRING" id="521460.Athe_1314"/>
<dbReference type="KEGG" id="ate:Athe_1314"/>
<dbReference type="eggNOG" id="COG0421">
    <property type="taxonomic scope" value="Bacteria"/>
</dbReference>
<dbReference type="HOGENOM" id="CLU_048199_0_0_9"/>
<dbReference type="UniPathway" id="UPA00248">
    <property type="reaction ID" value="UER00314"/>
</dbReference>
<dbReference type="Proteomes" id="UP000007723">
    <property type="component" value="Chromosome"/>
</dbReference>
<dbReference type="GO" id="GO:0005829">
    <property type="term" value="C:cytosol"/>
    <property type="evidence" value="ECO:0007669"/>
    <property type="project" value="TreeGrafter"/>
</dbReference>
<dbReference type="GO" id="GO:0004766">
    <property type="term" value="F:spermidine synthase activity"/>
    <property type="evidence" value="ECO:0007669"/>
    <property type="project" value="UniProtKB-UniRule"/>
</dbReference>
<dbReference type="GO" id="GO:0008295">
    <property type="term" value="P:spermidine biosynthetic process"/>
    <property type="evidence" value="ECO:0007669"/>
    <property type="project" value="UniProtKB-UniRule"/>
</dbReference>
<dbReference type="CDD" id="cd02440">
    <property type="entry name" value="AdoMet_MTases"/>
    <property type="match status" value="1"/>
</dbReference>
<dbReference type="FunFam" id="3.40.50.150:FF:000056">
    <property type="entry name" value="Polyamine aminopropyltransferase"/>
    <property type="match status" value="1"/>
</dbReference>
<dbReference type="Gene3D" id="2.30.140.10">
    <property type="entry name" value="Spermidine synthase, tetramerisation domain"/>
    <property type="match status" value="1"/>
</dbReference>
<dbReference type="Gene3D" id="3.40.50.150">
    <property type="entry name" value="Vaccinia Virus protein VP39"/>
    <property type="match status" value="1"/>
</dbReference>
<dbReference type="HAMAP" id="MF_00198">
    <property type="entry name" value="Spermidine_synth"/>
    <property type="match status" value="1"/>
</dbReference>
<dbReference type="InterPro" id="IPR030374">
    <property type="entry name" value="PABS"/>
</dbReference>
<dbReference type="InterPro" id="IPR030373">
    <property type="entry name" value="PABS_CS"/>
</dbReference>
<dbReference type="InterPro" id="IPR029063">
    <property type="entry name" value="SAM-dependent_MTases_sf"/>
</dbReference>
<dbReference type="InterPro" id="IPR001045">
    <property type="entry name" value="Spermi_synthase"/>
</dbReference>
<dbReference type="InterPro" id="IPR035246">
    <property type="entry name" value="Spermidine_synt_N"/>
</dbReference>
<dbReference type="InterPro" id="IPR037163">
    <property type="entry name" value="Spermidine_synt_N_sf"/>
</dbReference>
<dbReference type="NCBIfam" id="NF002010">
    <property type="entry name" value="PRK00811.1"/>
    <property type="match status" value="1"/>
</dbReference>
<dbReference type="NCBIfam" id="TIGR00417">
    <property type="entry name" value="speE"/>
    <property type="match status" value="1"/>
</dbReference>
<dbReference type="PANTHER" id="PTHR11558:SF11">
    <property type="entry name" value="SPERMIDINE SYNTHASE"/>
    <property type="match status" value="1"/>
</dbReference>
<dbReference type="PANTHER" id="PTHR11558">
    <property type="entry name" value="SPERMIDINE/SPERMINE SYNTHASE"/>
    <property type="match status" value="1"/>
</dbReference>
<dbReference type="Pfam" id="PF17284">
    <property type="entry name" value="Spermine_synt_N"/>
    <property type="match status" value="1"/>
</dbReference>
<dbReference type="Pfam" id="PF01564">
    <property type="entry name" value="Spermine_synth"/>
    <property type="match status" value="1"/>
</dbReference>
<dbReference type="SUPFAM" id="SSF53335">
    <property type="entry name" value="S-adenosyl-L-methionine-dependent methyltransferases"/>
    <property type="match status" value="1"/>
</dbReference>
<dbReference type="PROSITE" id="PS01330">
    <property type="entry name" value="PABS_1"/>
    <property type="match status" value="1"/>
</dbReference>
<dbReference type="PROSITE" id="PS51006">
    <property type="entry name" value="PABS_2"/>
    <property type="match status" value="1"/>
</dbReference>
<comment type="function">
    <text evidence="1">Catalyzes the irreversible transfer of a propylamine group from the amino donor S-adenosylmethioninamine (decarboxy-AdoMet) to putrescine (1,4-diaminobutane) to yield spermidine.</text>
</comment>
<comment type="catalytic activity">
    <reaction evidence="1">
        <text>S-adenosyl 3-(methylsulfanyl)propylamine + putrescine = S-methyl-5'-thioadenosine + spermidine + H(+)</text>
        <dbReference type="Rhea" id="RHEA:12721"/>
        <dbReference type="ChEBI" id="CHEBI:15378"/>
        <dbReference type="ChEBI" id="CHEBI:17509"/>
        <dbReference type="ChEBI" id="CHEBI:57443"/>
        <dbReference type="ChEBI" id="CHEBI:57834"/>
        <dbReference type="ChEBI" id="CHEBI:326268"/>
        <dbReference type="EC" id="2.5.1.16"/>
    </reaction>
</comment>
<comment type="pathway">
    <text evidence="1">Amine and polyamine biosynthesis; spermidine biosynthesis; spermidine from putrescine: step 1/1.</text>
</comment>
<comment type="subunit">
    <text evidence="1">Homodimer or homotetramer.</text>
</comment>
<comment type="subcellular location">
    <subcellularLocation>
        <location evidence="1">Cytoplasm</location>
    </subcellularLocation>
</comment>
<comment type="similarity">
    <text evidence="1">Belongs to the spermidine/spermine synthase family.</text>
</comment>
<reference key="1">
    <citation type="submission" date="2009-01" db="EMBL/GenBank/DDBJ databases">
        <title>Complete sequence of chromosome of Caldicellulosiruptor becscii DSM 6725.</title>
        <authorList>
            <person name="Lucas S."/>
            <person name="Copeland A."/>
            <person name="Lapidus A."/>
            <person name="Glavina del Rio T."/>
            <person name="Tice H."/>
            <person name="Bruce D."/>
            <person name="Goodwin L."/>
            <person name="Pitluck S."/>
            <person name="Sims D."/>
            <person name="Meincke L."/>
            <person name="Brettin T."/>
            <person name="Detter J.C."/>
            <person name="Han C."/>
            <person name="Larimer F."/>
            <person name="Land M."/>
            <person name="Hauser L."/>
            <person name="Kyrpides N."/>
            <person name="Ovchinnikova G."/>
            <person name="Kataeva I."/>
            <person name="Adams M.W.W."/>
        </authorList>
    </citation>
    <scope>NUCLEOTIDE SEQUENCE [LARGE SCALE GENOMIC DNA]</scope>
    <source>
        <strain>ATCC BAA-1888 / DSM 6725 / KCTC 15123 / Z-1320</strain>
    </source>
</reference>
<sequence>MAEMELWFTEQQTPDLGFTCKITKTIYTAKTQYQDLAILETKQFGRMLVLDGAVQTTIADEFCYHELISHVPLFTHPNPKKVAVIGGGDGGVIREILKHDEVEKAYLIEIDREVIEASKKYLPEISCALDDERAEVIITDGIKFVSENKNMFDVIIVDSTDPVGPAVGLFQDSFYKAVFECLKEDGLFVAQTESPFYDQDLIKNVFHAVKSIFPITRLYLGFIPTYPSGLWSFTLGSKKYDPLEVDVSRIKRIDTKYYNPELHKALFALPTFVQEIIK</sequence>
<organism>
    <name type="scientific">Caldicellulosiruptor bescii (strain ATCC BAA-1888 / DSM 6725 / KCTC 15123 / Z-1320)</name>
    <name type="common">Anaerocellum thermophilum</name>
    <dbReference type="NCBI Taxonomy" id="521460"/>
    <lineage>
        <taxon>Bacteria</taxon>
        <taxon>Bacillati</taxon>
        <taxon>Bacillota</taxon>
        <taxon>Bacillota incertae sedis</taxon>
        <taxon>Caldicellulosiruptorales</taxon>
        <taxon>Caldicellulosiruptoraceae</taxon>
        <taxon>Caldicellulosiruptor</taxon>
    </lineage>
</organism>
<accession>B9MRW0</accession>
<name>SPEE_CALBD</name>
<protein>
    <recommendedName>
        <fullName evidence="1">Polyamine aminopropyltransferase</fullName>
    </recommendedName>
    <alternativeName>
        <fullName evidence="1">Putrescine aminopropyltransferase</fullName>
        <shortName evidence="1">PAPT</shortName>
    </alternativeName>
    <alternativeName>
        <fullName evidence="1">Spermidine synthase</fullName>
        <shortName evidence="1">SPDS</shortName>
        <shortName evidence="1">SPDSY</shortName>
        <ecNumber evidence="1">2.5.1.16</ecNumber>
    </alternativeName>
</protein>
<proteinExistence type="inferred from homology"/>
<evidence type="ECO:0000255" key="1">
    <source>
        <dbReference type="HAMAP-Rule" id="MF_00198"/>
    </source>
</evidence>
<keyword id="KW-0963">Cytoplasm</keyword>
<keyword id="KW-0620">Polyamine biosynthesis</keyword>
<keyword id="KW-0745">Spermidine biosynthesis</keyword>
<keyword id="KW-0808">Transferase</keyword>